<proteinExistence type="predicted"/>
<keyword id="KW-0614">Plasmid</keyword>
<evidence type="ECO:0000256" key="1">
    <source>
        <dbReference type="SAM" id="MobiDB-lite"/>
    </source>
</evidence>
<feature type="chain" id="PRO_0000066438" description="Uncharacterized protein ORF4'">
    <location>
        <begin position="1"/>
        <end position="234"/>
    </location>
</feature>
<feature type="region of interest" description="Disordered" evidence="1">
    <location>
        <begin position="212"/>
        <end position="234"/>
    </location>
</feature>
<feature type="compositionally biased region" description="Low complexity" evidence="1">
    <location>
        <begin position="220"/>
        <end position="234"/>
    </location>
</feature>
<protein>
    <recommendedName>
        <fullName>Uncharacterized protein ORF4'</fullName>
    </recommendedName>
</protein>
<geneLocation type="plasmid">
    <name>pFZ1</name>
</geneLocation>
<dbReference type="EMBL" id="X68367">
    <property type="protein sequence ID" value="CAA48443.1"/>
    <property type="molecule type" value="Genomic_DNA"/>
</dbReference>
<dbReference type="PIR" id="S30319">
    <property type="entry name" value="S26453"/>
</dbReference>
<dbReference type="RefSeq" id="NP_039771.1">
    <property type="nucleotide sequence ID" value="NC_001337.1"/>
</dbReference>
<dbReference type="RefSeq" id="WP_010889858.1">
    <property type="nucleotide sequence ID" value="NC_001337.1"/>
</dbReference>
<dbReference type="InterPro" id="IPR007404">
    <property type="entry name" value="YdjM-like"/>
</dbReference>
<dbReference type="Pfam" id="PF04307">
    <property type="entry name" value="YdjM"/>
    <property type="match status" value="1"/>
</dbReference>
<organism>
    <name type="scientific">Methanothermobacter thermautotrophicus</name>
    <name type="common">Methanobacterium thermoformicicum</name>
    <dbReference type="NCBI Taxonomy" id="145262"/>
    <lineage>
        <taxon>Archaea</taxon>
        <taxon>Methanobacteriati</taxon>
        <taxon>Methanobacteriota</taxon>
        <taxon>Methanomada group</taxon>
        <taxon>Methanobacteria</taxon>
        <taxon>Methanobacteriales</taxon>
        <taxon>Methanobacteriaceae</taxon>
        <taxon>Methanothermobacter</taxon>
    </lineage>
</organism>
<sequence length="234" mass="26148">MVYARPIFGLCGGILWLSPERRSFTILFYVDNSFICSGRLCRKGGVNEHKRQLHNVFTLIPFVLLYLFYDVTTGAAMLSGVSSHILLDFMTPTGCPFFYPIYKGRYRVDWRHKGSGPREKRALTTIGILAAILLLVIYAPSPFAPTSAISQWKGSGSGASNNRTDINVNFNFRGNGDTWIHPYPNGSIFIDYVSDGDSRVYRYRGISRGGQGKHLKLDSNTTENKTTKQNETGG</sequence>
<accession>P29576</accession>
<name>YPZ4_METTF</name>
<reference key="1">
    <citation type="journal article" date="1992" name="Nucleic Acids Res.">
        <title>Modular organization of related Archaeal plasmids encoding different restriction-modification systems in Methanobacterium thermoformicicum.</title>
        <authorList>
            <person name="Noelling J."/>
            <person name="van Eeden F.J.M."/>
            <person name="Eggen R.I.L."/>
            <person name="de Vos W.M."/>
        </authorList>
    </citation>
    <scope>NUCLEOTIDE SEQUENCE [GENOMIC DNA]</scope>
    <source>
        <strain>DSM 3720 / Z-245</strain>
    </source>
</reference>